<dbReference type="EC" id="4.2.3.5" evidence="1"/>
<dbReference type="EMBL" id="CP000316">
    <property type="protein sequence ID" value="ABE43775.1"/>
    <property type="molecule type" value="Genomic_DNA"/>
</dbReference>
<dbReference type="RefSeq" id="WP_011482774.1">
    <property type="nucleotide sequence ID" value="NC_007948.1"/>
</dbReference>
<dbReference type="SMR" id="Q12CG7"/>
<dbReference type="STRING" id="296591.Bpro_1842"/>
<dbReference type="KEGG" id="pol:Bpro_1842"/>
<dbReference type="eggNOG" id="COG0082">
    <property type="taxonomic scope" value="Bacteria"/>
</dbReference>
<dbReference type="HOGENOM" id="CLU_034547_0_2_4"/>
<dbReference type="OrthoDB" id="9771806at2"/>
<dbReference type="UniPathway" id="UPA00053">
    <property type="reaction ID" value="UER00090"/>
</dbReference>
<dbReference type="Proteomes" id="UP000001983">
    <property type="component" value="Chromosome"/>
</dbReference>
<dbReference type="GO" id="GO:0005829">
    <property type="term" value="C:cytosol"/>
    <property type="evidence" value="ECO:0007669"/>
    <property type="project" value="TreeGrafter"/>
</dbReference>
<dbReference type="GO" id="GO:0004107">
    <property type="term" value="F:chorismate synthase activity"/>
    <property type="evidence" value="ECO:0007669"/>
    <property type="project" value="UniProtKB-UniRule"/>
</dbReference>
<dbReference type="GO" id="GO:0010181">
    <property type="term" value="F:FMN binding"/>
    <property type="evidence" value="ECO:0007669"/>
    <property type="project" value="TreeGrafter"/>
</dbReference>
<dbReference type="GO" id="GO:0008652">
    <property type="term" value="P:amino acid biosynthetic process"/>
    <property type="evidence" value="ECO:0007669"/>
    <property type="project" value="UniProtKB-KW"/>
</dbReference>
<dbReference type="GO" id="GO:0009073">
    <property type="term" value="P:aromatic amino acid family biosynthetic process"/>
    <property type="evidence" value="ECO:0007669"/>
    <property type="project" value="UniProtKB-KW"/>
</dbReference>
<dbReference type="GO" id="GO:0009423">
    <property type="term" value="P:chorismate biosynthetic process"/>
    <property type="evidence" value="ECO:0007669"/>
    <property type="project" value="UniProtKB-UniRule"/>
</dbReference>
<dbReference type="CDD" id="cd07304">
    <property type="entry name" value="Chorismate_synthase"/>
    <property type="match status" value="1"/>
</dbReference>
<dbReference type="FunFam" id="3.60.150.10:FF:000001">
    <property type="entry name" value="Chorismate synthase"/>
    <property type="match status" value="1"/>
</dbReference>
<dbReference type="Gene3D" id="3.60.150.10">
    <property type="entry name" value="Chorismate synthase AroC"/>
    <property type="match status" value="1"/>
</dbReference>
<dbReference type="HAMAP" id="MF_00300">
    <property type="entry name" value="Chorismate_synth"/>
    <property type="match status" value="1"/>
</dbReference>
<dbReference type="InterPro" id="IPR000453">
    <property type="entry name" value="Chorismate_synth"/>
</dbReference>
<dbReference type="InterPro" id="IPR035904">
    <property type="entry name" value="Chorismate_synth_AroC_sf"/>
</dbReference>
<dbReference type="InterPro" id="IPR020541">
    <property type="entry name" value="Chorismate_synthase_CS"/>
</dbReference>
<dbReference type="NCBIfam" id="TIGR00033">
    <property type="entry name" value="aroC"/>
    <property type="match status" value="1"/>
</dbReference>
<dbReference type="NCBIfam" id="NF003793">
    <property type="entry name" value="PRK05382.1"/>
    <property type="match status" value="1"/>
</dbReference>
<dbReference type="PANTHER" id="PTHR21085">
    <property type="entry name" value="CHORISMATE SYNTHASE"/>
    <property type="match status" value="1"/>
</dbReference>
<dbReference type="PANTHER" id="PTHR21085:SF0">
    <property type="entry name" value="CHORISMATE SYNTHASE"/>
    <property type="match status" value="1"/>
</dbReference>
<dbReference type="Pfam" id="PF01264">
    <property type="entry name" value="Chorismate_synt"/>
    <property type="match status" value="1"/>
</dbReference>
<dbReference type="PIRSF" id="PIRSF001456">
    <property type="entry name" value="Chorismate_synth"/>
    <property type="match status" value="1"/>
</dbReference>
<dbReference type="SUPFAM" id="SSF103263">
    <property type="entry name" value="Chorismate synthase, AroC"/>
    <property type="match status" value="1"/>
</dbReference>
<dbReference type="PROSITE" id="PS00787">
    <property type="entry name" value="CHORISMATE_SYNTHASE_1"/>
    <property type="match status" value="1"/>
</dbReference>
<dbReference type="PROSITE" id="PS00788">
    <property type="entry name" value="CHORISMATE_SYNTHASE_2"/>
    <property type="match status" value="1"/>
</dbReference>
<dbReference type="PROSITE" id="PS00789">
    <property type="entry name" value="CHORISMATE_SYNTHASE_3"/>
    <property type="match status" value="1"/>
</dbReference>
<evidence type="ECO:0000255" key="1">
    <source>
        <dbReference type="HAMAP-Rule" id="MF_00300"/>
    </source>
</evidence>
<comment type="function">
    <text evidence="1">Catalyzes the anti-1,4-elimination of the C-3 phosphate and the C-6 proR hydrogen from 5-enolpyruvylshikimate-3-phosphate (EPSP) to yield chorismate, which is the branch point compound that serves as the starting substrate for the three terminal pathways of aromatic amino acid biosynthesis. This reaction introduces a second double bond into the aromatic ring system.</text>
</comment>
<comment type="catalytic activity">
    <reaction evidence="1">
        <text>5-O-(1-carboxyvinyl)-3-phosphoshikimate = chorismate + phosphate</text>
        <dbReference type="Rhea" id="RHEA:21020"/>
        <dbReference type="ChEBI" id="CHEBI:29748"/>
        <dbReference type="ChEBI" id="CHEBI:43474"/>
        <dbReference type="ChEBI" id="CHEBI:57701"/>
        <dbReference type="EC" id="4.2.3.5"/>
    </reaction>
</comment>
<comment type="cofactor">
    <cofactor evidence="1">
        <name>FMNH2</name>
        <dbReference type="ChEBI" id="CHEBI:57618"/>
    </cofactor>
    <text evidence="1">Reduced FMN (FMNH(2)).</text>
</comment>
<comment type="pathway">
    <text evidence="1">Metabolic intermediate biosynthesis; chorismate biosynthesis; chorismate from D-erythrose 4-phosphate and phosphoenolpyruvate: step 7/7.</text>
</comment>
<comment type="subunit">
    <text evidence="1">Homotetramer.</text>
</comment>
<comment type="similarity">
    <text evidence="1">Belongs to the chorismate synthase family.</text>
</comment>
<proteinExistence type="inferred from homology"/>
<gene>
    <name evidence="1" type="primary">aroC</name>
    <name type="ordered locus">Bpro_1842</name>
</gene>
<accession>Q12CG7</accession>
<organism>
    <name type="scientific">Polaromonas sp. (strain JS666 / ATCC BAA-500)</name>
    <dbReference type="NCBI Taxonomy" id="296591"/>
    <lineage>
        <taxon>Bacteria</taxon>
        <taxon>Pseudomonadati</taxon>
        <taxon>Pseudomonadota</taxon>
        <taxon>Betaproteobacteria</taxon>
        <taxon>Burkholderiales</taxon>
        <taxon>Comamonadaceae</taxon>
        <taxon>Polaromonas</taxon>
    </lineage>
</organism>
<sequence>MSGSTFGNLFAVTNFGESHGPAIGCVIDGCPPGLALTEADIQTDLDRRRPGTSRHVTQRNEPDAVEILSGVYEGKTTGTPICLLIRNTDQRSKDYGNILETFRPGHADYSYLHKYGRRDPRGGGRASARLTAPMVAAGAVAKKWLAEKYGTSFRGCMAQIGDIAIPFESWEHVPRNPFFAPVADVSHLEDYMDALRKAGDSCGARIRVTASGVPVGLGEPLFDKLDADIAFAMMGINAVKGVEIGAGFASVTQRGTTHGDSLSPEGFLSNNAGGVLGGISTGQDLEVSIAIKPTSSIITPRQSIDTAGNPAEVVTKGRHDPCVGIRATPIAEAMLALVVMEHALRQRAQNADVTVSTPDIMRARG</sequence>
<feature type="chain" id="PRO_0000256312" description="Chorismate synthase">
    <location>
        <begin position="1"/>
        <end position="365"/>
    </location>
</feature>
<feature type="binding site" evidence="1">
    <location>
        <position position="48"/>
    </location>
    <ligand>
        <name>NADP(+)</name>
        <dbReference type="ChEBI" id="CHEBI:58349"/>
    </ligand>
</feature>
<feature type="binding site" evidence="1">
    <location>
        <position position="54"/>
    </location>
    <ligand>
        <name>NADP(+)</name>
        <dbReference type="ChEBI" id="CHEBI:58349"/>
    </ligand>
</feature>
<feature type="binding site" evidence="1">
    <location>
        <begin position="125"/>
        <end position="127"/>
    </location>
    <ligand>
        <name>FMN</name>
        <dbReference type="ChEBI" id="CHEBI:58210"/>
    </ligand>
</feature>
<feature type="binding site" evidence="1">
    <location>
        <begin position="237"/>
        <end position="238"/>
    </location>
    <ligand>
        <name>FMN</name>
        <dbReference type="ChEBI" id="CHEBI:58210"/>
    </ligand>
</feature>
<feature type="binding site" evidence="1">
    <location>
        <position position="277"/>
    </location>
    <ligand>
        <name>FMN</name>
        <dbReference type="ChEBI" id="CHEBI:58210"/>
    </ligand>
</feature>
<feature type="binding site" evidence="1">
    <location>
        <begin position="292"/>
        <end position="296"/>
    </location>
    <ligand>
        <name>FMN</name>
        <dbReference type="ChEBI" id="CHEBI:58210"/>
    </ligand>
</feature>
<feature type="binding site" evidence="1">
    <location>
        <position position="318"/>
    </location>
    <ligand>
        <name>FMN</name>
        <dbReference type="ChEBI" id="CHEBI:58210"/>
    </ligand>
</feature>
<name>AROC_POLSJ</name>
<keyword id="KW-0028">Amino-acid biosynthesis</keyword>
<keyword id="KW-0057">Aromatic amino acid biosynthesis</keyword>
<keyword id="KW-0274">FAD</keyword>
<keyword id="KW-0285">Flavoprotein</keyword>
<keyword id="KW-0288">FMN</keyword>
<keyword id="KW-0456">Lyase</keyword>
<keyword id="KW-0521">NADP</keyword>
<keyword id="KW-1185">Reference proteome</keyword>
<reference key="1">
    <citation type="journal article" date="2008" name="Appl. Environ. Microbiol.">
        <title>The genome of Polaromonas sp. strain JS666: insights into the evolution of a hydrocarbon- and xenobiotic-degrading bacterium, and features of relevance to biotechnology.</title>
        <authorList>
            <person name="Mattes T.E."/>
            <person name="Alexander A.K."/>
            <person name="Richardson P.M."/>
            <person name="Munk A.C."/>
            <person name="Han C.S."/>
            <person name="Stothard P."/>
            <person name="Coleman N.V."/>
        </authorList>
    </citation>
    <scope>NUCLEOTIDE SEQUENCE [LARGE SCALE GENOMIC DNA]</scope>
    <source>
        <strain>JS666 / ATCC BAA-500</strain>
    </source>
</reference>
<protein>
    <recommendedName>
        <fullName evidence="1">Chorismate synthase</fullName>
        <shortName evidence="1">CS</shortName>
        <ecNumber evidence="1">4.2.3.5</ecNumber>
    </recommendedName>
    <alternativeName>
        <fullName evidence="1">5-enolpyruvylshikimate-3-phosphate phospholyase</fullName>
    </alternativeName>
</protein>